<name>BGBP1_GALME</name>
<protein>
    <recommendedName>
        <fullName evidence="8">Beta-1,3-glucan-binding protein 1</fullName>
        <shortName evidence="8">BGBP1</shortName>
    </recommendedName>
    <alternativeName>
        <fullName evidence="7">Beta-1,3-glucan recognition protein</fullName>
    </alternativeName>
</protein>
<comment type="function">
    <text evidence="1 6">Plays a role in the recognition of invading microorganisms activating the phenoloxidase cascade (By similarity). Binds specifically to beta-1,3-glucan (By similarity). Binds the Aspergillus niger cell wall component alpha-1,3-glucan, a fungal pathogen-associated molecular pattern (PAMP) that activates the host immune response (PubMed:34443685).</text>
</comment>
<comment type="subunit">
    <text evidence="1">Monomer.</text>
</comment>
<comment type="subcellular location">
    <subcellularLocation>
        <location evidence="6">Secreted</location>
    </subcellularLocation>
    <text evidence="6">Secreted in the hemolymph.</text>
</comment>
<comment type="tissue specificity">
    <text evidence="6">Hemolymph.</text>
</comment>
<comment type="similarity">
    <text evidence="8">Belongs to the insect beta-1,3-glucan binding protein family.</text>
</comment>
<proteinExistence type="evidence at protein level"/>
<evidence type="ECO:0000250" key="1">
    <source>
        <dbReference type="UniProtKB" id="Q9NL89"/>
    </source>
</evidence>
<evidence type="ECO:0000255" key="2"/>
<evidence type="ECO:0000255" key="3">
    <source>
        <dbReference type="PROSITE-ProRule" id="PRU00498"/>
    </source>
</evidence>
<evidence type="ECO:0000255" key="4">
    <source>
        <dbReference type="PROSITE-ProRule" id="PRU01098"/>
    </source>
</evidence>
<evidence type="ECO:0000255" key="5">
    <source>
        <dbReference type="PROSITE-ProRule" id="PRU01314"/>
    </source>
</evidence>
<evidence type="ECO:0000269" key="6">
    <source>
    </source>
</evidence>
<evidence type="ECO:0000303" key="7">
    <source>
    </source>
</evidence>
<evidence type="ECO:0000305" key="8"/>
<evidence type="ECO:0000312" key="9">
    <source>
        <dbReference type="EMBL" id="CAK22401.1"/>
    </source>
</evidence>
<sequence length="490" mass="55395">MYKQTVVIFLLCFFICVSCYEVPPAKLEAIWPKGLRVSLPDDGYSLFAFHGKLNEEMEGLEAGHWSRDITKSKGGRWTFNDKQAKLKIGDKIYFWTYVIKEGLGYRQDNGEWTVTGYVDEAGNPVAPTSQPDAVVTEPPAAITPATAIVTNPPTSQNTYPCEISVSMVSVPGFVCKGQLLFEDNFNKGIDKGNIWTTENMFPGEPDYPFNVYLYDNVHVRDGKLIITPTTLESKYGEDYVRQQLDLTQRCTGTIGTADCTRVASGPIILPPVITSKINTKNRFSFKYGRVEVRARMPTGDWLIPEILLEPRDRIYGIHSYASGLLRVACVKGNVEYSKTLYGGPILCDSEPYRNVNLKQKIGFDHWNKDFHNYTLEWRPDGISLFVDGEKYGDVTPPTDGFYGDAKKENVQAASQWLKGTSMAPLDDYFYISIGLDVGGVHEFPDSSTKPWQNKATKAMLNFWNNRDQWFPTWFKDTSSLQVDYVRVYAL</sequence>
<feature type="signal peptide" evidence="2">
    <location>
        <begin position="1"/>
        <end position="19"/>
    </location>
</feature>
<feature type="chain" id="PRO_5004171107" description="Beta-1,3-glucan-binding protein 1" evidence="2">
    <location>
        <begin position="20"/>
        <end position="490"/>
    </location>
</feature>
<feature type="domain" description="CBM39" evidence="5">
    <location>
        <begin position="20"/>
        <end position="119"/>
    </location>
</feature>
<feature type="domain" description="GH16" evidence="4">
    <location>
        <begin position="152"/>
        <end position="490"/>
    </location>
</feature>
<feature type="glycosylation site" description="N-linked (GlcNAc...) asparagine" evidence="3">
    <location>
        <position position="372"/>
    </location>
</feature>
<gene>
    <name evidence="9" type="primary">bgrp1</name>
</gene>
<reference evidence="9" key="1">
    <citation type="submission" date="2006-05" db="EMBL/GenBank/DDBJ databases">
        <title>Identification of a beta-1,3-glucan recognition protein from the hemolymph of Galleria mellonella larvae.</title>
        <authorList>
            <person name="Niere M."/>
            <person name="Weise C."/>
            <person name="Wernig-Pohl U."/>
            <person name="Goetz P."/>
        </authorList>
    </citation>
    <scope>NUCLEOTIDE SEQUENCE [MRNA]</scope>
</reference>
<reference evidence="8" key="2">
    <citation type="journal article" date="2021" name="Molecules">
        <title>Fungal alpha-1,3-Glucan as a New Pathogen-Associated Molecular Pattern in the Insect Model Host Galleria mellonella.</title>
        <authorList>
            <person name="Staczek S."/>
            <person name="Zdybicka-Barabas A."/>
            <person name="Wojda I."/>
            <person name="Wiater A."/>
            <person name="Mak P."/>
            <person name="Suder P."/>
            <person name="Skrzypiec K."/>
            <person name="Cytrynska M."/>
        </authorList>
    </citation>
    <scope>PROTEIN SEQUENCE OF 20-39</scope>
    <scope>FUNCTION</scope>
    <scope>SUBCELLULAR LOCATION</scope>
    <scope>TISSUE SPECIFICITY</scope>
</reference>
<keyword id="KW-0903">Direct protein sequencing</keyword>
<keyword id="KW-0325">Glycoprotein</keyword>
<keyword id="KW-0391">Immunity</keyword>
<keyword id="KW-0399">Innate immunity</keyword>
<keyword id="KW-1185">Reference proteome</keyword>
<keyword id="KW-0964">Secreted</keyword>
<keyword id="KW-0732">Signal</keyword>
<accession>Q0E666</accession>
<accession>C0HLY9</accession>
<organism evidence="9">
    <name type="scientific">Galleria mellonella</name>
    <name type="common">Greater wax moth</name>
    <dbReference type="NCBI Taxonomy" id="7137"/>
    <lineage>
        <taxon>Eukaryota</taxon>
        <taxon>Metazoa</taxon>
        <taxon>Ecdysozoa</taxon>
        <taxon>Arthropoda</taxon>
        <taxon>Hexapoda</taxon>
        <taxon>Insecta</taxon>
        <taxon>Pterygota</taxon>
        <taxon>Neoptera</taxon>
        <taxon>Endopterygota</taxon>
        <taxon>Lepidoptera</taxon>
        <taxon>Glossata</taxon>
        <taxon>Ditrysia</taxon>
        <taxon>Pyraloidea</taxon>
        <taxon>Pyralidae</taxon>
        <taxon>Galleriinae</taxon>
        <taxon>Galleria</taxon>
    </lineage>
</organism>
<dbReference type="EMBL" id="AM265582">
    <property type="protein sequence ID" value="CAK22401.1"/>
    <property type="molecule type" value="mRNA"/>
</dbReference>
<dbReference type="SMR" id="Q0E666"/>
<dbReference type="FunCoup" id="Q0E666">
    <property type="interactions" value="55"/>
</dbReference>
<dbReference type="CAZy" id="CBM39">
    <property type="family name" value="Carbohydrate-Binding Module Family 39"/>
</dbReference>
<dbReference type="CAZy" id="GH16">
    <property type="family name" value="Glycoside Hydrolase Family 16"/>
</dbReference>
<dbReference type="GlyCosmos" id="Q0E666">
    <property type="glycosylation" value="1 site, No reported glycans"/>
</dbReference>
<dbReference type="EnsemblMetazoa" id="XM_026897087.2">
    <property type="protein sequence ID" value="XP_026752888.2"/>
    <property type="gene ID" value="LOC113513109"/>
</dbReference>
<dbReference type="InParanoid" id="Q0E666"/>
<dbReference type="Proteomes" id="UP000504614">
    <property type="component" value="Unplaced"/>
</dbReference>
<dbReference type="GO" id="GO:0005576">
    <property type="term" value="C:extracellular region"/>
    <property type="evidence" value="ECO:0007669"/>
    <property type="project" value="UniProtKB-SubCell"/>
</dbReference>
<dbReference type="GO" id="GO:0030246">
    <property type="term" value="F:carbohydrate binding"/>
    <property type="evidence" value="ECO:0007669"/>
    <property type="project" value="InterPro"/>
</dbReference>
<dbReference type="GO" id="GO:0004553">
    <property type="term" value="F:hydrolase activity, hydrolyzing O-glycosyl compounds"/>
    <property type="evidence" value="ECO:0007669"/>
    <property type="project" value="InterPro"/>
</dbReference>
<dbReference type="GO" id="GO:0005975">
    <property type="term" value="P:carbohydrate metabolic process"/>
    <property type="evidence" value="ECO:0007669"/>
    <property type="project" value="InterPro"/>
</dbReference>
<dbReference type="GO" id="GO:0045087">
    <property type="term" value="P:innate immune response"/>
    <property type="evidence" value="ECO:0007669"/>
    <property type="project" value="UniProtKB-KW"/>
</dbReference>
<dbReference type="CDD" id="cd02179">
    <property type="entry name" value="GH16_beta_GRP"/>
    <property type="match status" value="1"/>
</dbReference>
<dbReference type="FunFam" id="2.60.120.200:FF:000235">
    <property type="entry name" value="Beta-1,3-glucan-binding protein"/>
    <property type="match status" value="1"/>
</dbReference>
<dbReference type="FunFam" id="2.60.40.2140:FF:000001">
    <property type="entry name" value="Beta-1,3-glucan-binding protein"/>
    <property type="match status" value="1"/>
</dbReference>
<dbReference type="Gene3D" id="2.60.120.200">
    <property type="match status" value="1"/>
</dbReference>
<dbReference type="Gene3D" id="2.60.40.2140">
    <property type="entry name" value="Beta-1,3-glucan-recognition protein, N-terminal domain"/>
    <property type="match status" value="1"/>
</dbReference>
<dbReference type="InterPro" id="IPR031756">
    <property type="entry name" value="BGBP_N"/>
</dbReference>
<dbReference type="InterPro" id="IPR043030">
    <property type="entry name" value="BGBP_N_sf"/>
</dbReference>
<dbReference type="InterPro" id="IPR013320">
    <property type="entry name" value="ConA-like_dom_sf"/>
</dbReference>
<dbReference type="InterPro" id="IPR000757">
    <property type="entry name" value="GH16"/>
</dbReference>
<dbReference type="InterPro" id="IPR035806">
    <property type="entry name" value="GH16_GRP_C"/>
</dbReference>
<dbReference type="InterPro" id="IPR050546">
    <property type="entry name" value="Glycosyl_Hydrlase_16"/>
</dbReference>
<dbReference type="PANTHER" id="PTHR10963">
    <property type="entry name" value="GLYCOSYL HYDROLASE-RELATED"/>
    <property type="match status" value="1"/>
</dbReference>
<dbReference type="PANTHER" id="PTHR10963:SF60">
    <property type="entry name" value="GRAM-NEGATIVE BACTERIA-BINDING PROTEIN 1-RELATED"/>
    <property type="match status" value="1"/>
</dbReference>
<dbReference type="Pfam" id="PF15886">
    <property type="entry name" value="CBM39"/>
    <property type="match status" value="1"/>
</dbReference>
<dbReference type="Pfam" id="PF00722">
    <property type="entry name" value="Glyco_hydro_16"/>
    <property type="match status" value="1"/>
</dbReference>
<dbReference type="SUPFAM" id="SSF49899">
    <property type="entry name" value="Concanavalin A-like lectins/glucanases"/>
    <property type="match status" value="1"/>
</dbReference>
<dbReference type="PROSITE" id="PS51969">
    <property type="entry name" value="CBM39"/>
    <property type="match status" value="1"/>
</dbReference>
<dbReference type="PROSITE" id="PS51762">
    <property type="entry name" value="GH16_2"/>
    <property type="match status" value="1"/>
</dbReference>